<comment type="function">
    <text evidence="3">Glycerol dehydrogenase involved in the assimilation of glycerol.</text>
</comment>
<comment type="catalytic activity">
    <reaction evidence="3">
        <text>glycerol + NAD(+) = dihydroxyacetone + NADH + H(+)</text>
        <dbReference type="Rhea" id="RHEA:13769"/>
        <dbReference type="ChEBI" id="CHEBI:15378"/>
        <dbReference type="ChEBI" id="CHEBI:16016"/>
        <dbReference type="ChEBI" id="CHEBI:17754"/>
        <dbReference type="ChEBI" id="CHEBI:57540"/>
        <dbReference type="ChEBI" id="CHEBI:57945"/>
        <dbReference type="EC" id="1.1.1.6"/>
    </reaction>
</comment>
<comment type="cofactor">
    <cofactor evidence="6">
        <name>Zn(2+)</name>
        <dbReference type="ChEBI" id="CHEBI:29105"/>
    </cofactor>
    <text evidence="4">Binds 1 zinc ion per subunit.</text>
</comment>
<comment type="pathway">
    <text>Polyol metabolism; glycerol fermentation; glycerone phosphate from glycerol (oxidative route): step 1/2.</text>
</comment>
<comment type="subcellular location">
    <subcellularLocation>
        <location evidence="2">Mitochondrion</location>
    </subcellularLocation>
</comment>
<comment type="induction">
    <text evidence="3">Repressed by glucose.</text>
</comment>
<comment type="similarity">
    <text evidence="5">Belongs to the iron-containing alcohol dehydrogenase family.</text>
</comment>
<dbReference type="EC" id="1.1.1.6"/>
<dbReference type="EMBL" id="CU329670">
    <property type="protein sequence ID" value="CAB11766.1"/>
    <property type="molecule type" value="Genomic_DNA"/>
</dbReference>
<dbReference type="PIR" id="T37628">
    <property type="entry name" value="T37628"/>
</dbReference>
<dbReference type="RefSeq" id="NP_593651.1">
    <property type="nucleotide sequence ID" value="NM_001019083.2"/>
</dbReference>
<dbReference type="PDB" id="1TA9">
    <property type="method" value="X-ray"/>
    <property type="resolution" value="1.90 A"/>
    <property type="chains" value="A/B=1-450"/>
</dbReference>
<dbReference type="PDBsum" id="1TA9"/>
<dbReference type="SMR" id="O13702"/>
<dbReference type="BioGRID" id="279326">
    <property type="interactions" value="71"/>
</dbReference>
<dbReference type="FunCoup" id="O13702">
    <property type="interactions" value="27"/>
</dbReference>
<dbReference type="STRING" id="284812.O13702"/>
<dbReference type="iPTMnet" id="O13702"/>
<dbReference type="PaxDb" id="4896-SPAC13F5.03c.1"/>
<dbReference type="EnsemblFungi" id="SPAC13F5.03c.1">
    <property type="protein sequence ID" value="SPAC13F5.03c.1:pep"/>
    <property type="gene ID" value="SPAC13F5.03c"/>
</dbReference>
<dbReference type="GeneID" id="2542881"/>
<dbReference type="KEGG" id="spo:2542881"/>
<dbReference type="PomBase" id="SPAC13F5.03c">
    <property type="gene designation" value="gld1"/>
</dbReference>
<dbReference type="VEuPathDB" id="FungiDB:SPAC13F5.03c"/>
<dbReference type="eggNOG" id="ENOG502QUB4">
    <property type="taxonomic scope" value="Eukaryota"/>
</dbReference>
<dbReference type="HOGENOM" id="CLU_044754_1_0_1"/>
<dbReference type="InParanoid" id="O13702"/>
<dbReference type="OMA" id="GVGTIMM"/>
<dbReference type="PhylomeDB" id="O13702"/>
<dbReference type="BRENDA" id="1.1.1.6">
    <property type="organism ID" value="5613"/>
</dbReference>
<dbReference type="UniPathway" id="UPA00617">
    <property type="reaction ID" value="UER00668"/>
</dbReference>
<dbReference type="EvolutionaryTrace" id="O13702"/>
<dbReference type="PRO" id="PR:O13702"/>
<dbReference type="Proteomes" id="UP000002485">
    <property type="component" value="Chromosome I"/>
</dbReference>
<dbReference type="GO" id="GO:0005739">
    <property type="term" value="C:mitochondrion"/>
    <property type="evidence" value="ECO:0007005"/>
    <property type="project" value="PomBase"/>
</dbReference>
<dbReference type="GO" id="GO:0008888">
    <property type="term" value="F:glycerol dehydrogenase (NAD+) activity"/>
    <property type="evidence" value="ECO:0000315"/>
    <property type="project" value="PomBase"/>
</dbReference>
<dbReference type="GO" id="GO:0008270">
    <property type="term" value="F:zinc ion binding"/>
    <property type="evidence" value="ECO:0000250"/>
    <property type="project" value="PomBase"/>
</dbReference>
<dbReference type="GO" id="GO:0019564">
    <property type="term" value="P:aerobic glycerol catabolic process"/>
    <property type="evidence" value="ECO:0000315"/>
    <property type="project" value="PomBase"/>
</dbReference>
<dbReference type="GO" id="GO:0061613">
    <property type="term" value="P:glycolytic process from glycerol"/>
    <property type="evidence" value="ECO:0000315"/>
    <property type="project" value="PomBase"/>
</dbReference>
<dbReference type="CDD" id="cd08170">
    <property type="entry name" value="GlyDH"/>
    <property type="match status" value="1"/>
</dbReference>
<dbReference type="FunFam" id="3.40.50.1970:FF:000005">
    <property type="entry name" value="Glycerol dehydrogenase"/>
    <property type="match status" value="1"/>
</dbReference>
<dbReference type="Gene3D" id="3.40.50.1970">
    <property type="match status" value="1"/>
</dbReference>
<dbReference type="Gene3D" id="1.20.1090.10">
    <property type="entry name" value="Dehydroquinate synthase-like - alpha domain"/>
    <property type="match status" value="1"/>
</dbReference>
<dbReference type="InterPro" id="IPR001670">
    <property type="entry name" value="ADH_Fe/GldA"/>
</dbReference>
<dbReference type="InterPro" id="IPR018211">
    <property type="entry name" value="ADH_Fe_CS"/>
</dbReference>
<dbReference type="InterPro" id="IPR016205">
    <property type="entry name" value="Glycerol_DH"/>
</dbReference>
<dbReference type="NCBIfam" id="NF006941">
    <property type="entry name" value="PRK09423.1"/>
    <property type="match status" value="1"/>
</dbReference>
<dbReference type="PANTHER" id="PTHR43616">
    <property type="entry name" value="GLYCEROL DEHYDROGENASE"/>
    <property type="match status" value="1"/>
</dbReference>
<dbReference type="PANTHER" id="PTHR43616:SF5">
    <property type="entry name" value="GLYCEROL DEHYDROGENASE 1"/>
    <property type="match status" value="1"/>
</dbReference>
<dbReference type="Pfam" id="PF00465">
    <property type="entry name" value="Fe-ADH"/>
    <property type="match status" value="1"/>
</dbReference>
<dbReference type="SUPFAM" id="SSF56796">
    <property type="entry name" value="Dehydroquinate synthase-like"/>
    <property type="match status" value="1"/>
</dbReference>
<dbReference type="PROSITE" id="PS00913">
    <property type="entry name" value="ADH_IRON_1"/>
    <property type="match status" value="1"/>
</dbReference>
<reference key="1">
    <citation type="journal article" date="2002" name="Nature">
        <title>The genome sequence of Schizosaccharomyces pombe.</title>
        <authorList>
            <person name="Wood V."/>
            <person name="Gwilliam R."/>
            <person name="Rajandream M.A."/>
            <person name="Lyne M.H."/>
            <person name="Lyne R."/>
            <person name="Stewart A."/>
            <person name="Sgouros J.G."/>
            <person name="Peat N."/>
            <person name="Hayles J."/>
            <person name="Baker S.G."/>
            <person name="Basham D."/>
            <person name="Bowman S."/>
            <person name="Brooks K."/>
            <person name="Brown D."/>
            <person name="Brown S."/>
            <person name="Chillingworth T."/>
            <person name="Churcher C.M."/>
            <person name="Collins M."/>
            <person name="Connor R."/>
            <person name="Cronin A."/>
            <person name="Davis P."/>
            <person name="Feltwell T."/>
            <person name="Fraser A."/>
            <person name="Gentles S."/>
            <person name="Goble A."/>
            <person name="Hamlin N."/>
            <person name="Harris D.E."/>
            <person name="Hidalgo J."/>
            <person name="Hodgson G."/>
            <person name="Holroyd S."/>
            <person name="Hornsby T."/>
            <person name="Howarth S."/>
            <person name="Huckle E.J."/>
            <person name="Hunt S."/>
            <person name="Jagels K."/>
            <person name="James K.D."/>
            <person name="Jones L."/>
            <person name="Jones M."/>
            <person name="Leather S."/>
            <person name="McDonald S."/>
            <person name="McLean J."/>
            <person name="Mooney P."/>
            <person name="Moule S."/>
            <person name="Mungall K.L."/>
            <person name="Murphy L.D."/>
            <person name="Niblett D."/>
            <person name="Odell C."/>
            <person name="Oliver K."/>
            <person name="O'Neil S."/>
            <person name="Pearson D."/>
            <person name="Quail M.A."/>
            <person name="Rabbinowitsch E."/>
            <person name="Rutherford K.M."/>
            <person name="Rutter S."/>
            <person name="Saunders D."/>
            <person name="Seeger K."/>
            <person name="Sharp S."/>
            <person name="Skelton J."/>
            <person name="Simmonds M.N."/>
            <person name="Squares R."/>
            <person name="Squares S."/>
            <person name="Stevens K."/>
            <person name="Taylor K."/>
            <person name="Taylor R.G."/>
            <person name="Tivey A."/>
            <person name="Walsh S.V."/>
            <person name="Warren T."/>
            <person name="Whitehead S."/>
            <person name="Woodward J.R."/>
            <person name="Volckaert G."/>
            <person name="Aert R."/>
            <person name="Robben J."/>
            <person name="Grymonprez B."/>
            <person name="Weltjens I."/>
            <person name="Vanstreels E."/>
            <person name="Rieger M."/>
            <person name="Schaefer M."/>
            <person name="Mueller-Auer S."/>
            <person name="Gabel C."/>
            <person name="Fuchs M."/>
            <person name="Duesterhoeft A."/>
            <person name="Fritzc C."/>
            <person name="Holzer E."/>
            <person name="Moestl D."/>
            <person name="Hilbert H."/>
            <person name="Borzym K."/>
            <person name="Langer I."/>
            <person name="Beck A."/>
            <person name="Lehrach H."/>
            <person name="Reinhardt R."/>
            <person name="Pohl T.M."/>
            <person name="Eger P."/>
            <person name="Zimmermann W."/>
            <person name="Wedler H."/>
            <person name="Wambutt R."/>
            <person name="Purnelle B."/>
            <person name="Goffeau A."/>
            <person name="Cadieu E."/>
            <person name="Dreano S."/>
            <person name="Gloux S."/>
            <person name="Lelaure V."/>
            <person name="Mottier S."/>
            <person name="Galibert F."/>
            <person name="Aves S.J."/>
            <person name="Xiang Z."/>
            <person name="Hunt C."/>
            <person name="Moore K."/>
            <person name="Hurst S.M."/>
            <person name="Lucas M."/>
            <person name="Rochet M."/>
            <person name="Gaillardin C."/>
            <person name="Tallada V.A."/>
            <person name="Garzon A."/>
            <person name="Thode G."/>
            <person name="Daga R.R."/>
            <person name="Cruzado L."/>
            <person name="Jimenez J."/>
            <person name="Sanchez M."/>
            <person name="del Rey F."/>
            <person name="Benito J."/>
            <person name="Dominguez A."/>
            <person name="Revuelta J.L."/>
            <person name="Moreno S."/>
            <person name="Armstrong J."/>
            <person name="Forsburg S.L."/>
            <person name="Cerutti L."/>
            <person name="Lowe T."/>
            <person name="McCombie W.R."/>
            <person name="Paulsen I."/>
            <person name="Potashkin J."/>
            <person name="Shpakovski G.V."/>
            <person name="Ussery D."/>
            <person name="Barrell B.G."/>
            <person name="Nurse P."/>
        </authorList>
    </citation>
    <scope>NUCLEOTIDE SEQUENCE [LARGE SCALE GENOMIC DNA]</scope>
    <source>
        <strain>972 / ATCC 24843</strain>
    </source>
</reference>
<reference key="2">
    <citation type="journal article" date="2006" name="Nat. Biotechnol.">
        <title>ORFeome cloning and global analysis of protein localization in the fission yeast Schizosaccharomyces pombe.</title>
        <authorList>
            <person name="Matsuyama A."/>
            <person name="Arai R."/>
            <person name="Yashiroda Y."/>
            <person name="Shirai A."/>
            <person name="Kamata A."/>
            <person name="Sekido S."/>
            <person name="Kobayashi Y."/>
            <person name="Hashimoto A."/>
            <person name="Hamamoto M."/>
            <person name="Hiraoka Y."/>
            <person name="Horinouchi S."/>
            <person name="Yoshida M."/>
        </authorList>
    </citation>
    <scope>SUBCELLULAR LOCATION [LARGE SCALE ANALYSIS]</scope>
</reference>
<reference key="3">
    <citation type="journal article" date="2010" name="Appl. Microbiol. Biotechnol.">
        <title>The gld1+ gene encoding glycerol dehydrogenase is required for glycerol metabolism in Schizosaccharomyces pombe.</title>
        <authorList>
            <person name="Matsuzawa T."/>
            <person name="Ohashi T."/>
            <person name="Hosomi A."/>
            <person name="Tanaka N."/>
            <person name="Tohda H."/>
            <person name="Takegawa K."/>
        </authorList>
    </citation>
    <scope>FUNCTION</scope>
    <scope>CATALYTIC ACTIVITY</scope>
    <scope>INDUCTION</scope>
</reference>
<reference key="4">
    <citation type="submission" date="2005-08" db="PDB data bank">
        <title>Crystal structure of glycerol dehydrogenase from Schizosaccharomyces pombe.</title>
        <authorList>
            <person name="Mulichak A.M."/>
        </authorList>
    </citation>
    <scope>X-RAY CRYSTALLOGRAPHY (1.9 ANGSTROMS) IN COMPLEX WITH ZINC AND SUBSTRATE</scope>
    <scope>COFACTOR</scope>
</reference>
<accession>O13702</accession>
<keyword id="KW-0002">3D-structure</keyword>
<keyword id="KW-0319">Glycerol metabolism</keyword>
<keyword id="KW-0479">Metal-binding</keyword>
<keyword id="KW-0496">Mitochondrion</keyword>
<keyword id="KW-0520">NAD</keyword>
<keyword id="KW-0560">Oxidoreductase</keyword>
<keyword id="KW-1185">Reference proteome</keyword>
<keyword id="KW-0862">Zinc</keyword>
<name>GLD1_SCHPO</name>
<sequence>MIGPRLCAATPRFPLVSLAHRNSKVFALASSNAVAQRWGKRFYAPIETETPHKVGVEFEESKDRIFTSPQKYVQGRHAFTRSYMYVKKWATKSAVVLADQNVWNICANKIVDSLSQNGMTVTKLVFGGEASLVELDKLRKQCPDDTQVIIGVGGGKTMDSAKYIAHSMNLPSIICPTTASSDAATSSLSVIYTPDGQFQKYSFYPLNPNLIFIDTDVIVRAPVRFLISGIGDALSTWVETESVIRSNSTSFAGGVASIAGRYIARACKDTLEKYALSAILSNTRGVCTEAFENVVEANTLMSGLGFENGGLAAAHAIHNGMTAIHGPVHRLMHGEKVAYGTLVQVVLEDWPLEDFNNLASFMAKCHLPITLEELGIPNVTDEELLMVGRATLRPDESIHNMSKKFNPSQIADAIKAVDSYSQKWQEQTGWTERFRLPPSRHSPHLTDIHP</sequence>
<gene>
    <name type="primary">gld1</name>
    <name type="ORF">SPAC13F5.03c</name>
</gene>
<feature type="chain" id="PRO_0000314770" description="Glycerol dehydrogenase 1">
    <location>
        <begin position="1"/>
        <end position="450"/>
    </location>
</feature>
<feature type="binding site" evidence="1">
    <location>
        <position position="99"/>
    </location>
    <ligand>
        <name>NAD(+)</name>
        <dbReference type="ChEBI" id="CHEBI:57540"/>
    </ligand>
</feature>
<feature type="binding site" evidence="1">
    <location>
        <begin position="155"/>
        <end position="159"/>
    </location>
    <ligand>
        <name>NAD(+)</name>
        <dbReference type="ChEBI" id="CHEBI:57540"/>
    </ligand>
</feature>
<feature type="binding site" evidence="1">
    <location>
        <begin position="177"/>
        <end position="180"/>
    </location>
    <ligand>
        <name>NAD(+)</name>
        <dbReference type="ChEBI" id="CHEBI:57540"/>
    </ligand>
</feature>
<feature type="binding site" evidence="1">
    <location>
        <position position="182"/>
    </location>
    <ligand>
        <name>substrate</name>
    </ligand>
</feature>
<feature type="binding site" evidence="1">
    <location>
        <position position="186"/>
    </location>
    <ligand>
        <name>NAD(+)</name>
        <dbReference type="ChEBI" id="CHEBI:57540"/>
    </ligand>
</feature>
<feature type="binding site" evidence="1">
    <location>
        <position position="188"/>
    </location>
    <ligand>
        <name>NAD(+)</name>
        <dbReference type="ChEBI" id="CHEBI:57540"/>
    </ligand>
</feature>
<feature type="binding site" evidence="1">
    <location>
        <position position="192"/>
    </location>
    <ligand>
        <name>NAD(+)</name>
        <dbReference type="ChEBI" id="CHEBI:57540"/>
    </ligand>
</feature>
<feature type="binding site" evidence="1">
    <location>
        <position position="232"/>
    </location>
    <ligand>
        <name>substrate</name>
    </ligand>
</feature>
<feature type="binding site" evidence="4">
    <location>
        <position position="232"/>
    </location>
    <ligand>
        <name>Zn(2+)</name>
        <dbReference type="ChEBI" id="CHEBI:29105"/>
        <note>catalytic</note>
    </ligand>
</feature>
<feature type="binding site" evidence="4">
    <location>
        <position position="315"/>
    </location>
    <ligand>
        <name>substrate</name>
    </ligand>
</feature>
<feature type="binding site" evidence="4">
    <location>
        <position position="315"/>
    </location>
    <ligand>
        <name>Zn(2+)</name>
        <dbReference type="ChEBI" id="CHEBI:29105"/>
        <note>catalytic</note>
    </ligand>
</feature>
<feature type="binding site" evidence="4">
    <location>
        <position position="333"/>
    </location>
    <ligand>
        <name>substrate</name>
    </ligand>
</feature>
<feature type="binding site" evidence="4">
    <location>
        <position position="333"/>
    </location>
    <ligand>
        <name>Zn(2+)</name>
        <dbReference type="ChEBI" id="CHEBI:29105"/>
        <note>catalytic</note>
    </ligand>
</feature>
<feature type="strand" evidence="7">
    <location>
        <begin position="62"/>
        <end position="67"/>
    </location>
</feature>
<feature type="strand" evidence="7">
    <location>
        <begin position="70"/>
        <end position="75"/>
    </location>
</feature>
<feature type="helix" evidence="7">
    <location>
        <begin position="78"/>
        <end position="81"/>
    </location>
</feature>
<feature type="helix" evidence="7">
    <location>
        <begin position="82"/>
        <end position="86"/>
    </location>
</feature>
<feature type="turn" evidence="7">
    <location>
        <begin position="87"/>
        <end position="89"/>
    </location>
</feature>
<feature type="strand" evidence="7">
    <location>
        <begin position="91"/>
        <end position="99"/>
    </location>
</feature>
<feature type="helix" evidence="7">
    <location>
        <begin position="100"/>
        <end position="105"/>
    </location>
</feature>
<feature type="helix" evidence="7">
    <location>
        <begin position="107"/>
        <end position="116"/>
    </location>
</feature>
<feature type="strand" evidence="7">
    <location>
        <begin position="120"/>
        <end position="126"/>
    </location>
</feature>
<feature type="helix" evidence="7">
    <location>
        <begin position="132"/>
        <end position="139"/>
    </location>
</feature>
<feature type="strand" evidence="7">
    <location>
        <begin position="148"/>
        <end position="154"/>
    </location>
</feature>
<feature type="helix" evidence="7">
    <location>
        <begin position="155"/>
        <end position="167"/>
    </location>
</feature>
<feature type="strand" evidence="7">
    <location>
        <begin position="172"/>
        <end position="178"/>
    </location>
</feature>
<feature type="strand" evidence="7">
    <location>
        <begin position="187"/>
        <end position="191"/>
    </location>
</feature>
<feature type="strand" evidence="7">
    <location>
        <begin position="200"/>
        <end position="203"/>
    </location>
</feature>
<feature type="strand" evidence="7">
    <location>
        <begin position="209"/>
        <end position="214"/>
    </location>
</feature>
<feature type="helix" evidence="7">
    <location>
        <begin position="215"/>
        <end position="220"/>
    </location>
</feature>
<feature type="helix" evidence="7">
    <location>
        <begin position="223"/>
        <end position="245"/>
    </location>
</feature>
<feature type="strand" evidence="7">
    <location>
        <begin position="253"/>
        <end position="255"/>
    </location>
</feature>
<feature type="helix" evidence="7">
    <location>
        <begin position="258"/>
        <end position="284"/>
    </location>
</feature>
<feature type="helix" evidence="7">
    <location>
        <begin position="289"/>
        <end position="307"/>
    </location>
</feature>
<feature type="helix" evidence="7">
    <location>
        <begin position="313"/>
        <end position="321"/>
    </location>
</feature>
<feature type="helix" evidence="7">
    <location>
        <begin position="322"/>
        <end position="324"/>
    </location>
</feature>
<feature type="helix" evidence="7">
    <location>
        <begin position="326"/>
        <end position="330"/>
    </location>
</feature>
<feature type="helix" evidence="7">
    <location>
        <begin position="333"/>
        <end position="347"/>
    </location>
</feature>
<feature type="helix" evidence="7">
    <location>
        <begin position="352"/>
        <end position="364"/>
    </location>
</feature>
<feature type="helix" evidence="7">
    <location>
        <begin position="371"/>
        <end position="374"/>
    </location>
</feature>
<feature type="helix" evidence="7">
    <location>
        <begin position="381"/>
        <end position="391"/>
    </location>
</feature>
<feature type="helix" evidence="7">
    <location>
        <begin position="397"/>
        <end position="400"/>
    </location>
</feature>
<feature type="strand" evidence="7">
    <location>
        <begin position="401"/>
        <end position="403"/>
    </location>
</feature>
<feature type="helix" evidence="7">
    <location>
        <begin position="407"/>
        <end position="428"/>
    </location>
</feature>
<organism>
    <name type="scientific">Schizosaccharomyces pombe (strain 972 / ATCC 24843)</name>
    <name type="common">Fission yeast</name>
    <dbReference type="NCBI Taxonomy" id="284812"/>
    <lineage>
        <taxon>Eukaryota</taxon>
        <taxon>Fungi</taxon>
        <taxon>Dikarya</taxon>
        <taxon>Ascomycota</taxon>
        <taxon>Taphrinomycotina</taxon>
        <taxon>Schizosaccharomycetes</taxon>
        <taxon>Schizosaccharomycetales</taxon>
        <taxon>Schizosaccharomycetaceae</taxon>
        <taxon>Schizosaccharomyces</taxon>
    </lineage>
</organism>
<protein>
    <recommendedName>
        <fullName>Glycerol dehydrogenase 1</fullName>
        <shortName>GDH</shortName>
        <shortName>GLDH</shortName>
        <ecNumber>1.1.1.6</ecNumber>
    </recommendedName>
</protein>
<evidence type="ECO:0000250" key="1"/>
<evidence type="ECO:0000269" key="2">
    <source>
    </source>
</evidence>
<evidence type="ECO:0000269" key="3">
    <source>
    </source>
</evidence>
<evidence type="ECO:0000269" key="4">
    <source ref="4"/>
</evidence>
<evidence type="ECO:0000305" key="5"/>
<evidence type="ECO:0000305" key="6">
    <source ref="4"/>
</evidence>
<evidence type="ECO:0007829" key="7">
    <source>
        <dbReference type="PDB" id="1TA9"/>
    </source>
</evidence>
<proteinExistence type="evidence at protein level"/>